<sequence>MVLSQRQRDELNRAIADYLRSNGYEEAYSVFKKEAELDMNEELDKKYAGLLEKKWTSVIRLQKKVMELESKLNEAKEEFTSGGPLGQKRDPKEWIPRPPEKYALSGHRSPVTRVIFHPVFSVMVSASEDATIKVWDYETGDFERTLKGHTDSVQDISFDHSGKLLASCSADMTIKLWDFQGFECIRTMHGHDHNVSSVAIMPNGDHIVSASRDKTIKMWEVQTGYCVKTFTGHREWVRMVRPNQDGTLIASCSNDQTVRVWVVATKECKAELREHEHVVECISWAPESSYSSISEATGSETKKSGKPGPFLLSGSRDKTIKMWDVSTGMCLMTLVGHDNWVRGVLFHSGGKFILSCADDKTLRVWDYKNKRCMKTLNAHEHFVTSLDFHKTAPYVVTGFVDQTVKVWECR</sequence>
<feature type="chain" id="PRO_0000051064" description="Platelet-activating factor acetylhydrolase IB subunit alpha">
    <location>
        <begin position="1"/>
        <end position="410"/>
    </location>
</feature>
<feature type="domain" description="LisH" evidence="7">
    <location>
        <begin position="7"/>
        <end position="39"/>
    </location>
</feature>
<feature type="repeat" description="WD 1">
    <location>
        <begin position="106"/>
        <end position="147"/>
    </location>
</feature>
<feature type="repeat" description="WD 2">
    <location>
        <begin position="148"/>
        <end position="187"/>
    </location>
</feature>
<feature type="repeat" description="WD 3">
    <location>
        <begin position="190"/>
        <end position="229"/>
    </location>
</feature>
<feature type="repeat" description="WD 4">
    <location>
        <begin position="232"/>
        <end position="271"/>
    </location>
</feature>
<feature type="repeat" description="WD 5">
    <location>
        <begin position="274"/>
        <end position="333"/>
    </location>
</feature>
<feature type="repeat" description="WD 6">
    <location>
        <begin position="336"/>
        <end position="377"/>
    </location>
</feature>
<feature type="repeat" description="WD 7">
    <location>
        <begin position="379"/>
        <end position="410"/>
    </location>
</feature>
<feature type="region of interest" description="Interaction with NDEL1" evidence="7">
    <location>
        <begin position="1"/>
        <end position="102"/>
    </location>
</feature>
<feature type="region of interest" description="Interaction with NDE1" evidence="7">
    <location>
        <begin position="1"/>
        <end position="66"/>
    </location>
</feature>
<feature type="region of interest" description="Required for self-association and interaction with PAFAH1B2 and PAFAH1B3" evidence="7">
    <location>
        <begin position="1"/>
        <end position="38"/>
    </location>
</feature>
<feature type="region of interest" description="Interaction with dynein and dynactin" evidence="7">
    <location>
        <begin position="83"/>
        <end position="410"/>
    </location>
</feature>
<feature type="region of interest" description="Interaction with DCX" evidence="7">
    <location>
        <begin position="367"/>
        <end position="409"/>
    </location>
</feature>
<feature type="region of interest" description="Interaction with NDEL1" evidence="7">
    <location>
        <begin position="388"/>
        <end position="410"/>
    </location>
</feature>
<feature type="coiled-coil region" evidence="7">
    <location>
        <begin position="56"/>
        <end position="82"/>
    </location>
</feature>
<feature type="modified residue" description="N6-acetyllysine" evidence="2">
    <location>
        <position position="53"/>
    </location>
</feature>
<feature type="modified residue" description="Phosphoserine" evidence="2">
    <location>
        <position position="109"/>
    </location>
</feature>
<proteinExistence type="evidence at transcript level"/>
<comment type="function">
    <text evidence="1 2 3 7">Regulatory subunit (beta subunit) of the cytosolic type I platelet-activating factor (PAF) acetylhydrolase (PAF-AH (I)), an enzyme that catalyzes the hydrolyze of the acetyl group at the sn-2 position of PAF and its analogs and participates in PAF inactivation. Regulates the PAF-AH (I) activity in a catalytic dimer composition-dependent manner (By similarity). Positively regulates the activity of the minus-end directed microtubule motor protein dynein. May enhance dynein-mediated microtubule sliding by targeting dynein to the microtubule plus end. Required for several dynein- and microtubule-dependent processes such as the maintenance of Golgi integrity, the peripheral transport of microtubule fragments and the coupling of the nucleus and centrosome. Required during brain development for the proliferation of neuronal precursors and the migration of newly formed neurons from the ventricular/subventricular zone toward the cortical plate. Neuronal migration involves a process called nucleokinesis, whereby migrating cells extend an anterior process into which the nucleus subsequently translocates. During nucleokinesis dynein at the nuclear surface may translocate the nucleus towards the centrosome by exerting force on centrosomal microtubules. Also required for proper activation of Rho GTPases and actin polymerization at the leading edge of locomoting cerebellar neurons and postmigratory hippocampal neurons in response to calcium influx triggered via NMDA receptors. May also play a role in other forms of cell locomotion including the migration of fibroblasts during wound healing. Required for dynein recruitment to microtubule plus ends and BICD2-bound cargos. May modulate the Reelin pathway through interaction of the PAF-AH (I) catalytic dimer with VLDLR (By similarity).</text>
</comment>
<comment type="subunit">
    <text evidence="1 2 7">Can self-associate. Component of the cytosolic PAF-AH (I) heterotetrameric enzyme, which is composed of PAFAH1B1 (beta), PAFAH1B2 (alpha2) and PAFAH1B3 (alpha1) subunits. The catalytic activity of the enzyme resides in the alpha1 (PAFAH1B3) and alpha2 (PAFAH1B2) subunits, whereas the beta subunit (PAFAH1B1) has regulatory activity. Trimer formation is not essential for the catalytic activity. Interacts with the catalytic dimer of PAF-AH (I) heterotetrameric enzyme: interacts with PAFAH1B2 homodimer (alpha2/alpha2 homodimer), PAFAH1B3 homodimer (alpha1/alpha1 homodimer) and PAFAH1B2-PAFAH1B3 heterodimer (alpha2/alpha1 heterodimer) (By similarity). Interacts with DCX, dynein, dynactin, IQGAP1, KATNB1, NDE1, NDEL1, NUDC and RSN. Interacts with DISC1, and this interaction is enhanced by NDEL1. Interacts with DAB1 when DAB1 is phosphorylated in response to RELN/reelin signaling. Interacts with INTS13. Interacts with DCDC1.</text>
</comment>
<comment type="subcellular location">
    <subcellularLocation>
        <location evidence="7">Cytoplasm</location>
        <location evidence="7">Cytoskeleton</location>
    </subcellularLocation>
    <subcellularLocation>
        <location evidence="7">Cytoplasm</location>
        <location evidence="7">Cytoskeleton</location>
        <location evidence="7">Microtubule organizing center</location>
        <location evidence="7">Centrosome</location>
    </subcellularLocation>
    <subcellularLocation>
        <location evidence="7">Cytoplasm</location>
        <location evidence="7">Cytoskeleton</location>
        <location evidence="7">Spindle</location>
    </subcellularLocation>
    <subcellularLocation>
        <location evidence="7">Nucleus membrane</location>
    </subcellularLocation>
    <text evidence="7">Localizes to the plus end of microtubules and to the centrosome. May localize to the nuclear membrane. Redistributes to axons during neuronal development. Also localizes to the microtubules of the manchette in elongating spermatids and to the meiotic spindle in spermatocytes.</text>
</comment>
<comment type="domain">
    <text evidence="7">Dimerization mediated by the LisH domain may be required to activate dynein.</text>
</comment>
<comment type="miscellaneous">
    <text evidence="2 4 5 6">Originally the subunits of the type I platelet-activating factor (PAF) acetylhydrolase was named alpha (PAFAH1B1), beta (PAFAH1B2) and gamma (PAFAH1B3) (By similarity). Now these subunits have been renamed beta (PAFAH1B1), alpha2 (PAFAH1B2) and alpha1 (PAFAH1B3) respectively (By similarity).</text>
</comment>
<comment type="similarity">
    <text evidence="7">Belongs to the WD repeat LIS1/nudF family.</text>
</comment>
<dbReference type="EMBL" id="AY665285">
    <property type="protein sequence ID" value="AAV74323.1"/>
    <property type="molecule type" value="mRNA"/>
</dbReference>
<dbReference type="RefSeq" id="NP_001029263.1">
    <property type="nucleotide sequence ID" value="NM_001034091.1"/>
</dbReference>
<dbReference type="SMR" id="Q5IS43"/>
<dbReference type="FunCoup" id="Q5IS43">
    <property type="interactions" value="2242"/>
</dbReference>
<dbReference type="STRING" id="9598.ENSPTRP00000078363"/>
<dbReference type="PaxDb" id="9598-ENSPTRP00000014595"/>
<dbReference type="GeneID" id="454422"/>
<dbReference type="CTD" id="5048"/>
<dbReference type="eggNOG" id="KOG0295">
    <property type="taxonomic scope" value="Eukaryota"/>
</dbReference>
<dbReference type="InParanoid" id="Q5IS43"/>
<dbReference type="Proteomes" id="UP000002277">
    <property type="component" value="Unplaced"/>
</dbReference>
<dbReference type="GO" id="GO:0008247">
    <property type="term" value="C:1-alkyl-2-acetylglycerophosphocholine esterase complex"/>
    <property type="evidence" value="ECO:0000250"/>
    <property type="project" value="UniProtKB"/>
</dbReference>
<dbReference type="GO" id="GO:1904115">
    <property type="term" value="C:axon cytoplasm"/>
    <property type="evidence" value="ECO:0007669"/>
    <property type="project" value="GOC"/>
</dbReference>
<dbReference type="GO" id="GO:0005813">
    <property type="term" value="C:centrosome"/>
    <property type="evidence" value="ECO:0007669"/>
    <property type="project" value="UniProtKB-SubCell"/>
</dbReference>
<dbReference type="GO" id="GO:0005881">
    <property type="term" value="C:cytoplasmic microtubule"/>
    <property type="evidence" value="ECO:0000318"/>
    <property type="project" value="GO_Central"/>
</dbReference>
<dbReference type="GO" id="GO:0000776">
    <property type="term" value="C:kinetochore"/>
    <property type="evidence" value="ECO:0000318"/>
    <property type="project" value="GO_Central"/>
</dbReference>
<dbReference type="GO" id="GO:0005875">
    <property type="term" value="C:microtubule associated complex"/>
    <property type="evidence" value="ECO:0000318"/>
    <property type="project" value="GO_Central"/>
</dbReference>
<dbReference type="GO" id="GO:0043005">
    <property type="term" value="C:neuron projection"/>
    <property type="evidence" value="ECO:0000318"/>
    <property type="project" value="GO_Central"/>
</dbReference>
<dbReference type="GO" id="GO:0043025">
    <property type="term" value="C:neuronal cell body"/>
    <property type="evidence" value="ECO:0000318"/>
    <property type="project" value="GO_Central"/>
</dbReference>
<dbReference type="GO" id="GO:0005635">
    <property type="term" value="C:nuclear envelope"/>
    <property type="evidence" value="ECO:0000318"/>
    <property type="project" value="GO_Central"/>
</dbReference>
<dbReference type="GO" id="GO:0031965">
    <property type="term" value="C:nuclear membrane"/>
    <property type="evidence" value="ECO:0007669"/>
    <property type="project" value="UniProtKB-SubCell"/>
</dbReference>
<dbReference type="GO" id="GO:0005819">
    <property type="term" value="C:spindle"/>
    <property type="evidence" value="ECO:0007669"/>
    <property type="project" value="UniProtKB-SubCell"/>
</dbReference>
<dbReference type="GO" id="GO:0070840">
    <property type="term" value="F:dynein complex binding"/>
    <property type="evidence" value="ECO:0000318"/>
    <property type="project" value="GO_Central"/>
</dbReference>
<dbReference type="GO" id="GO:0051010">
    <property type="term" value="F:microtubule plus-end binding"/>
    <property type="evidence" value="ECO:0000318"/>
    <property type="project" value="GO_Central"/>
</dbReference>
<dbReference type="GO" id="GO:0046982">
    <property type="term" value="F:protein heterodimerization activity"/>
    <property type="evidence" value="ECO:0000250"/>
    <property type="project" value="UniProtKB"/>
</dbReference>
<dbReference type="GO" id="GO:0048854">
    <property type="term" value="P:brain morphogenesis"/>
    <property type="evidence" value="ECO:0000318"/>
    <property type="project" value="GO_Central"/>
</dbReference>
<dbReference type="GO" id="GO:0051301">
    <property type="term" value="P:cell division"/>
    <property type="evidence" value="ECO:0007669"/>
    <property type="project" value="UniProtKB-KW"/>
</dbReference>
<dbReference type="GO" id="GO:0000132">
    <property type="term" value="P:establishment of mitotic spindle orientation"/>
    <property type="evidence" value="ECO:0000318"/>
    <property type="project" value="GO_Central"/>
</dbReference>
<dbReference type="GO" id="GO:0007281">
    <property type="term" value="P:germ cell development"/>
    <property type="evidence" value="ECO:0000318"/>
    <property type="project" value="GO_Central"/>
</dbReference>
<dbReference type="GO" id="GO:0016042">
    <property type="term" value="P:lipid catabolic process"/>
    <property type="evidence" value="ECO:0007669"/>
    <property type="project" value="UniProtKB-KW"/>
</dbReference>
<dbReference type="GO" id="GO:0031023">
    <property type="term" value="P:microtubule organizing center organization"/>
    <property type="evidence" value="ECO:0000318"/>
    <property type="project" value="GO_Central"/>
</dbReference>
<dbReference type="GO" id="GO:0051012">
    <property type="term" value="P:microtubule sliding"/>
    <property type="evidence" value="ECO:0007669"/>
    <property type="project" value="UniProtKB-UniRule"/>
</dbReference>
<dbReference type="GO" id="GO:0007097">
    <property type="term" value="P:nuclear migration"/>
    <property type="evidence" value="ECO:0000318"/>
    <property type="project" value="GO_Central"/>
</dbReference>
<dbReference type="GO" id="GO:0038026">
    <property type="term" value="P:reelin-mediated signaling pathway"/>
    <property type="evidence" value="ECO:0000250"/>
    <property type="project" value="UniProtKB"/>
</dbReference>
<dbReference type="GO" id="GO:0008090">
    <property type="term" value="P:retrograde axonal transport"/>
    <property type="evidence" value="ECO:0000318"/>
    <property type="project" value="GO_Central"/>
</dbReference>
<dbReference type="GO" id="GO:0047496">
    <property type="term" value="P:vesicle transport along microtubule"/>
    <property type="evidence" value="ECO:0000318"/>
    <property type="project" value="GO_Central"/>
</dbReference>
<dbReference type="CDD" id="cd00200">
    <property type="entry name" value="WD40"/>
    <property type="match status" value="1"/>
</dbReference>
<dbReference type="FunFam" id="2.130.10.10:FF:000038">
    <property type="entry name" value="Lissencephaly-1 homolog B"/>
    <property type="match status" value="1"/>
</dbReference>
<dbReference type="FunFam" id="1.20.960.30:FF:000002">
    <property type="entry name" value="Platelet-activating factor acetylhydrolase ib"/>
    <property type="match status" value="1"/>
</dbReference>
<dbReference type="Gene3D" id="1.20.960.30">
    <property type="match status" value="1"/>
</dbReference>
<dbReference type="Gene3D" id="2.130.10.10">
    <property type="entry name" value="YVTN repeat-like/Quinoprotein amine dehydrogenase"/>
    <property type="match status" value="1"/>
</dbReference>
<dbReference type="HAMAP" id="MF_03141">
    <property type="entry name" value="lis1"/>
    <property type="match status" value="1"/>
</dbReference>
<dbReference type="InterPro" id="IPR017252">
    <property type="entry name" value="Dynein_regulator_LIS1"/>
</dbReference>
<dbReference type="InterPro" id="IPR020472">
    <property type="entry name" value="G-protein_beta_WD-40_rep"/>
</dbReference>
<dbReference type="InterPro" id="IPR037190">
    <property type="entry name" value="LIS1_N"/>
</dbReference>
<dbReference type="InterPro" id="IPR006594">
    <property type="entry name" value="LisH"/>
</dbReference>
<dbReference type="InterPro" id="IPR056795">
    <property type="entry name" value="PAC1-like_LisH-like_dom"/>
</dbReference>
<dbReference type="InterPro" id="IPR015943">
    <property type="entry name" value="WD40/YVTN_repeat-like_dom_sf"/>
</dbReference>
<dbReference type="InterPro" id="IPR019775">
    <property type="entry name" value="WD40_repeat_CS"/>
</dbReference>
<dbReference type="InterPro" id="IPR036322">
    <property type="entry name" value="WD40_repeat_dom_sf"/>
</dbReference>
<dbReference type="InterPro" id="IPR001680">
    <property type="entry name" value="WD40_rpt"/>
</dbReference>
<dbReference type="InterPro" id="IPR050349">
    <property type="entry name" value="WD_LIS1/nudF_dynein_reg"/>
</dbReference>
<dbReference type="PANTHER" id="PTHR44129">
    <property type="entry name" value="WD REPEAT-CONTAINING PROTEIN POP1"/>
    <property type="match status" value="1"/>
</dbReference>
<dbReference type="Pfam" id="PF24951">
    <property type="entry name" value="LisH_PAC1"/>
    <property type="match status" value="1"/>
</dbReference>
<dbReference type="Pfam" id="PF00400">
    <property type="entry name" value="WD40"/>
    <property type="match status" value="7"/>
</dbReference>
<dbReference type="PIRSF" id="PIRSF037647">
    <property type="entry name" value="Dynein_regulator_Lis1"/>
    <property type="match status" value="1"/>
</dbReference>
<dbReference type="PRINTS" id="PR00320">
    <property type="entry name" value="GPROTEINBRPT"/>
</dbReference>
<dbReference type="SMART" id="SM00667">
    <property type="entry name" value="LisH"/>
    <property type="match status" value="1"/>
</dbReference>
<dbReference type="SMART" id="SM00320">
    <property type="entry name" value="WD40"/>
    <property type="match status" value="7"/>
</dbReference>
<dbReference type="SUPFAM" id="SSF109925">
    <property type="entry name" value="Lissencephaly-1 protein (Lis-1, PAF-AH alpha) N-terminal domain"/>
    <property type="match status" value="1"/>
</dbReference>
<dbReference type="SUPFAM" id="SSF50978">
    <property type="entry name" value="WD40 repeat-like"/>
    <property type="match status" value="1"/>
</dbReference>
<dbReference type="PROSITE" id="PS50896">
    <property type="entry name" value="LISH"/>
    <property type="match status" value="1"/>
</dbReference>
<dbReference type="PROSITE" id="PS00678">
    <property type="entry name" value="WD_REPEATS_1"/>
    <property type="match status" value="4"/>
</dbReference>
<dbReference type="PROSITE" id="PS50082">
    <property type="entry name" value="WD_REPEATS_2"/>
    <property type="match status" value="7"/>
</dbReference>
<dbReference type="PROSITE" id="PS50294">
    <property type="entry name" value="WD_REPEATS_REGION"/>
    <property type="match status" value="1"/>
</dbReference>
<reference key="1">
    <citation type="journal article" date="2004" name="Cell">
        <title>Accelerated evolution of nervous system genes in the origin of Homo sapiens.</title>
        <authorList>
            <person name="Dorus S."/>
            <person name="Vallender E.J."/>
            <person name="Evans P.D."/>
            <person name="Anderson J.R."/>
            <person name="Gilbert S.L."/>
            <person name="Mahowald M."/>
            <person name="Wyckoff G.J."/>
            <person name="Malcom C.M."/>
            <person name="Lahn B.T."/>
        </authorList>
    </citation>
    <scope>NUCLEOTIDE SEQUENCE [MRNA]</scope>
</reference>
<accession>Q5IS43</accession>
<name>LIS1_PANTR</name>
<organism>
    <name type="scientific">Pan troglodytes</name>
    <name type="common">Chimpanzee</name>
    <dbReference type="NCBI Taxonomy" id="9598"/>
    <lineage>
        <taxon>Eukaryota</taxon>
        <taxon>Metazoa</taxon>
        <taxon>Chordata</taxon>
        <taxon>Craniata</taxon>
        <taxon>Vertebrata</taxon>
        <taxon>Euteleostomi</taxon>
        <taxon>Mammalia</taxon>
        <taxon>Eutheria</taxon>
        <taxon>Euarchontoglires</taxon>
        <taxon>Primates</taxon>
        <taxon>Haplorrhini</taxon>
        <taxon>Catarrhini</taxon>
        <taxon>Hominidae</taxon>
        <taxon>Pan</taxon>
    </lineage>
</organism>
<gene>
    <name evidence="2 7" type="primary">PAFAH1B1</name>
    <name evidence="7" type="synonym">LIS1</name>
    <name type="synonym">PAFAHA</name>
</gene>
<keyword id="KW-0007">Acetylation</keyword>
<keyword id="KW-0131">Cell cycle</keyword>
<keyword id="KW-0132">Cell division</keyword>
<keyword id="KW-0175">Coiled coil</keyword>
<keyword id="KW-0963">Cytoplasm</keyword>
<keyword id="KW-0206">Cytoskeleton</keyword>
<keyword id="KW-0217">Developmental protein</keyword>
<keyword id="KW-0221">Differentiation</keyword>
<keyword id="KW-0442">Lipid degradation</keyword>
<keyword id="KW-0443">Lipid metabolism</keyword>
<keyword id="KW-0472">Membrane</keyword>
<keyword id="KW-0493">Microtubule</keyword>
<keyword id="KW-0498">Mitosis</keyword>
<keyword id="KW-0524">Neurogenesis</keyword>
<keyword id="KW-0539">Nucleus</keyword>
<keyword id="KW-0597">Phosphoprotein</keyword>
<keyword id="KW-1185">Reference proteome</keyword>
<keyword id="KW-0677">Repeat</keyword>
<keyword id="KW-0813">Transport</keyword>
<keyword id="KW-0853">WD repeat</keyword>
<evidence type="ECO:0000250" key="1">
    <source>
        <dbReference type="UniProtKB" id="P43033"/>
    </source>
</evidence>
<evidence type="ECO:0000250" key="2">
    <source>
        <dbReference type="UniProtKB" id="P43034"/>
    </source>
</evidence>
<evidence type="ECO:0000250" key="3">
    <source>
        <dbReference type="UniProtKB" id="P63005"/>
    </source>
</evidence>
<evidence type="ECO:0000250" key="4">
    <source>
        <dbReference type="UniProtKB" id="P68402"/>
    </source>
</evidence>
<evidence type="ECO:0000250" key="5">
    <source>
        <dbReference type="UniProtKB" id="Q15102"/>
    </source>
</evidence>
<evidence type="ECO:0000250" key="6">
    <source>
        <dbReference type="UniProtKB" id="Q29460"/>
    </source>
</evidence>
<evidence type="ECO:0000255" key="7">
    <source>
        <dbReference type="HAMAP-Rule" id="MF_03141"/>
    </source>
</evidence>
<protein>
    <recommendedName>
        <fullName evidence="2 7">Platelet-activating factor acetylhydrolase IB subunit alpha</fullName>
    </recommendedName>
    <alternativeName>
        <fullName evidence="7">Lissencephaly-1 protein</fullName>
        <shortName evidence="7">LIS-1</shortName>
    </alternativeName>
    <alternativeName>
        <fullName evidence="7">PAF acetylhydrolase 45 kDa subunit</fullName>
        <shortName evidence="7">PAF-AH 45 kDa subunit</shortName>
    </alternativeName>
    <alternativeName>
        <fullName evidence="7">PAF-AH alpha</fullName>
        <shortName evidence="7">PAFAH alpha</shortName>
    </alternativeName>
</protein>